<reference key="1">
    <citation type="submission" date="2007-03" db="EMBL/GenBank/DDBJ databases">
        <title>Complete sequence of Desulfotomaculum reducens MI-1.</title>
        <authorList>
            <consortium name="US DOE Joint Genome Institute"/>
            <person name="Copeland A."/>
            <person name="Lucas S."/>
            <person name="Lapidus A."/>
            <person name="Barry K."/>
            <person name="Detter J.C."/>
            <person name="Glavina del Rio T."/>
            <person name="Hammon N."/>
            <person name="Israni S."/>
            <person name="Dalin E."/>
            <person name="Tice H."/>
            <person name="Pitluck S."/>
            <person name="Sims D."/>
            <person name="Brettin T."/>
            <person name="Bruce D."/>
            <person name="Han C."/>
            <person name="Tapia R."/>
            <person name="Schmutz J."/>
            <person name="Larimer F."/>
            <person name="Land M."/>
            <person name="Hauser L."/>
            <person name="Kyrpides N."/>
            <person name="Kim E."/>
            <person name="Tebo B.M."/>
            <person name="Richardson P."/>
        </authorList>
    </citation>
    <scope>NUCLEOTIDE SEQUENCE [LARGE SCALE GENOMIC DNA]</scope>
    <source>
        <strain>ATCC BAA-1160 / DSM 100696 / MI-1</strain>
    </source>
</reference>
<name>Y1797_DESRM</name>
<evidence type="ECO:0000255" key="1">
    <source>
        <dbReference type="HAMAP-Rule" id="MF_01600"/>
    </source>
</evidence>
<evidence type="ECO:0000256" key="2">
    <source>
        <dbReference type="SAM" id="MobiDB-lite"/>
    </source>
</evidence>
<comment type="subcellular location">
    <subcellularLocation>
        <location evidence="1">Cell membrane</location>
        <topology evidence="1">Multi-pass membrane protein</topology>
    </subcellularLocation>
</comment>
<comment type="similarity">
    <text evidence="1">Belongs to the UPF0182 family.</text>
</comment>
<accession>A4J5G9</accession>
<feature type="chain" id="PRO_0000323476" description="UPF0182 protein Dred_1797">
    <location>
        <begin position="1"/>
        <end position="932"/>
    </location>
</feature>
<feature type="transmembrane region" description="Helical" evidence="1">
    <location>
        <begin position="11"/>
        <end position="31"/>
    </location>
</feature>
<feature type="transmembrane region" description="Helical" evidence="1">
    <location>
        <begin position="53"/>
        <end position="73"/>
    </location>
</feature>
<feature type="transmembrane region" description="Helical" evidence="1">
    <location>
        <begin position="118"/>
        <end position="138"/>
    </location>
</feature>
<feature type="transmembrane region" description="Helical" evidence="1">
    <location>
        <begin position="180"/>
        <end position="200"/>
    </location>
</feature>
<feature type="transmembrane region" description="Helical" evidence="1">
    <location>
        <begin position="209"/>
        <end position="229"/>
    </location>
</feature>
<feature type="transmembrane region" description="Helical" evidence="1">
    <location>
        <begin position="264"/>
        <end position="284"/>
    </location>
</feature>
<feature type="transmembrane region" description="Helical" evidence="1">
    <location>
        <begin position="292"/>
        <end position="312"/>
    </location>
</feature>
<feature type="region of interest" description="Disordered" evidence="2">
    <location>
        <begin position="861"/>
        <end position="883"/>
    </location>
</feature>
<protein>
    <recommendedName>
        <fullName evidence="1">UPF0182 protein Dred_1797</fullName>
    </recommendedName>
</protein>
<proteinExistence type="inferred from homology"/>
<sequence length="932" mass="107068">MRGKSRFSLGLVILAGALLFSLIGWGAGLYIEWLWFKTLNYQQVFLTRLTSEIGLRVLVGIIMFLLLLINLMLTRKSVLKAVESAKAFRPFQRDDDNVITINPNPQIDWREQITPGRLTLAFTLLSMALGFLYSSSVAGDWVTILQYFNQSSFNITDPIFNKNLGFYFFSLPFWHIVYRILASAIFLNIVLVALVYLVTDTARGGLAKIFRFPSARYHLSVLAALFFVIKSWGYRLDQYDLLYSSTGVVHGAGYTDIHATLLAYKALMILSLVTAIIIIANIFLNRFRLTAYAIGGLLVTSILLGSVYPAIIQKFVVLPNEFNREIPYIANNIKFSQQAYNLDKIEQKDFPAGRTLQAKDIQENKNTIDNIRLWDWQPLRQTYSQLQEMRLYYEFKNIDIDRYAIDEEYRQIMIAVREMNQDQLPQQAKTWINQRLKYTHGYGIAMSPVNEVSGEGLPHFFLKDIPPVASTNIKINRPEIYYGESDDGYVIVNTKTDEFDYPKGDGNSYSKYEGDSGVKVNSFFRKLLFAFTFADYKLLFTGDITNESQVLFYRNIKERIPKIAPFLSYDADPYPVINNQGEIYWMWDAYTISNMYPYSEPFDDRGNNYIRNSVKVTMNAYNGSVNFYISDAEDPIIKTYAKIFPGMFRPLSEMPEDLKKHIRYPEDMFLVQSRMYSLYHMTDPQVFYNREDKWTLPTEKVGEEEKAMDPYYTITVLPGEKNPEYLLIMPFNPQNKKNMIAWLGARSDGENYGKMVVYEFPKQELVYGPMQIEARIDQDTTISQQLSLWDQRGSSVIRGNLLVIPVEDSLLYVEPLYLQSEQSKMPELRRVIVASGDKIVMEPTLELALQKIYGEGAVLKDRPQQGVPPATDQPAGQQPAPEKTVKELAAEANRLYDDAQAKLKAGDWAGYGQSLNQLKDILTKLQNQSFSQ</sequence>
<organism>
    <name type="scientific">Desulforamulus reducens (strain ATCC BAA-1160 / DSM 100696 / MI-1)</name>
    <name type="common">Desulfotomaculum reducens</name>
    <dbReference type="NCBI Taxonomy" id="349161"/>
    <lineage>
        <taxon>Bacteria</taxon>
        <taxon>Bacillati</taxon>
        <taxon>Bacillota</taxon>
        <taxon>Clostridia</taxon>
        <taxon>Eubacteriales</taxon>
        <taxon>Peptococcaceae</taxon>
        <taxon>Desulforamulus</taxon>
    </lineage>
</organism>
<keyword id="KW-1003">Cell membrane</keyword>
<keyword id="KW-0472">Membrane</keyword>
<keyword id="KW-1185">Reference proteome</keyword>
<keyword id="KW-0812">Transmembrane</keyword>
<keyword id="KW-1133">Transmembrane helix</keyword>
<dbReference type="EMBL" id="CP000612">
    <property type="protein sequence ID" value="ABO50322.1"/>
    <property type="molecule type" value="Genomic_DNA"/>
</dbReference>
<dbReference type="RefSeq" id="WP_011878134.1">
    <property type="nucleotide sequence ID" value="NC_009253.1"/>
</dbReference>
<dbReference type="SMR" id="A4J5G9"/>
<dbReference type="STRING" id="349161.Dred_1797"/>
<dbReference type="KEGG" id="drm:Dred_1797"/>
<dbReference type="eggNOG" id="COG1615">
    <property type="taxonomic scope" value="Bacteria"/>
</dbReference>
<dbReference type="HOGENOM" id="CLU_007733_0_0_9"/>
<dbReference type="OrthoDB" id="9763654at2"/>
<dbReference type="Proteomes" id="UP000001556">
    <property type="component" value="Chromosome"/>
</dbReference>
<dbReference type="GO" id="GO:0005576">
    <property type="term" value="C:extracellular region"/>
    <property type="evidence" value="ECO:0007669"/>
    <property type="project" value="TreeGrafter"/>
</dbReference>
<dbReference type="GO" id="GO:0005886">
    <property type="term" value="C:plasma membrane"/>
    <property type="evidence" value="ECO:0007669"/>
    <property type="project" value="UniProtKB-SubCell"/>
</dbReference>
<dbReference type="HAMAP" id="MF_01600">
    <property type="entry name" value="UPF0182"/>
    <property type="match status" value="1"/>
</dbReference>
<dbReference type="InterPro" id="IPR005372">
    <property type="entry name" value="UPF0182"/>
</dbReference>
<dbReference type="PANTHER" id="PTHR39344">
    <property type="entry name" value="UPF0182 PROTEIN SLL1060"/>
    <property type="match status" value="1"/>
</dbReference>
<dbReference type="PANTHER" id="PTHR39344:SF1">
    <property type="entry name" value="UPF0182 PROTEIN SLL1060"/>
    <property type="match status" value="1"/>
</dbReference>
<dbReference type="Pfam" id="PF03699">
    <property type="entry name" value="UPF0182"/>
    <property type="match status" value="1"/>
</dbReference>
<gene>
    <name type="ordered locus">Dred_1797</name>
</gene>